<reference key="1">
    <citation type="journal article" date="1999" name="Nature">
        <title>Sequence and analysis of chromosome 4 of the plant Arabidopsis thaliana.</title>
        <authorList>
            <person name="Mayer K.F.X."/>
            <person name="Schueller C."/>
            <person name="Wambutt R."/>
            <person name="Murphy G."/>
            <person name="Volckaert G."/>
            <person name="Pohl T."/>
            <person name="Duesterhoeft A."/>
            <person name="Stiekema W."/>
            <person name="Entian K.-D."/>
            <person name="Terryn N."/>
            <person name="Harris B."/>
            <person name="Ansorge W."/>
            <person name="Brandt P."/>
            <person name="Grivell L.A."/>
            <person name="Rieger M."/>
            <person name="Weichselgartner M."/>
            <person name="de Simone V."/>
            <person name="Obermaier B."/>
            <person name="Mache R."/>
            <person name="Mueller M."/>
            <person name="Kreis M."/>
            <person name="Delseny M."/>
            <person name="Puigdomenech P."/>
            <person name="Watson M."/>
            <person name="Schmidtheini T."/>
            <person name="Reichert B."/>
            <person name="Portetelle D."/>
            <person name="Perez-Alonso M."/>
            <person name="Boutry M."/>
            <person name="Bancroft I."/>
            <person name="Vos P."/>
            <person name="Hoheisel J."/>
            <person name="Zimmermann W."/>
            <person name="Wedler H."/>
            <person name="Ridley P."/>
            <person name="Langham S.-A."/>
            <person name="McCullagh B."/>
            <person name="Bilham L."/>
            <person name="Robben J."/>
            <person name="van der Schueren J."/>
            <person name="Grymonprez B."/>
            <person name="Chuang Y.-J."/>
            <person name="Vandenbussche F."/>
            <person name="Braeken M."/>
            <person name="Weltjens I."/>
            <person name="Voet M."/>
            <person name="Bastiaens I."/>
            <person name="Aert R."/>
            <person name="Defoor E."/>
            <person name="Weitzenegger T."/>
            <person name="Bothe G."/>
            <person name="Ramsperger U."/>
            <person name="Hilbert H."/>
            <person name="Braun M."/>
            <person name="Holzer E."/>
            <person name="Brandt A."/>
            <person name="Peters S."/>
            <person name="van Staveren M."/>
            <person name="Dirkse W."/>
            <person name="Mooijman P."/>
            <person name="Klein Lankhorst R."/>
            <person name="Rose M."/>
            <person name="Hauf J."/>
            <person name="Koetter P."/>
            <person name="Berneiser S."/>
            <person name="Hempel S."/>
            <person name="Feldpausch M."/>
            <person name="Lamberth S."/>
            <person name="Van den Daele H."/>
            <person name="De Keyser A."/>
            <person name="Buysshaert C."/>
            <person name="Gielen J."/>
            <person name="Villarroel R."/>
            <person name="De Clercq R."/>
            <person name="van Montagu M."/>
            <person name="Rogers J."/>
            <person name="Cronin A."/>
            <person name="Quail M.A."/>
            <person name="Bray-Allen S."/>
            <person name="Clark L."/>
            <person name="Doggett J."/>
            <person name="Hall S."/>
            <person name="Kay M."/>
            <person name="Lennard N."/>
            <person name="McLay K."/>
            <person name="Mayes R."/>
            <person name="Pettett A."/>
            <person name="Rajandream M.A."/>
            <person name="Lyne M."/>
            <person name="Benes V."/>
            <person name="Rechmann S."/>
            <person name="Borkova D."/>
            <person name="Bloecker H."/>
            <person name="Scharfe M."/>
            <person name="Grimm M."/>
            <person name="Loehnert T.-H."/>
            <person name="Dose S."/>
            <person name="de Haan M."/>
            <person name="Maarse A.C."/>
            <person name="Schaefer M."/>
            <person name="Mueller-Auer S."/>
            <person name="Gabel C."/>
            <person name="Fuchs M."/>
            <person name="Fartmann B."/>
            <person name="Granderath K."/>
            <person name="Dauner D."/>
            <person name="Herzl A."/>
            <person name="Neumann S."/>
            <person name="Argiriou A."/>
            <person name="Vitale D."/>
            <person name="Liguori R."/>
            <person name="Piravandi E."/>
            <person name="Massenet O."/>
            <person name="Quigley F."/>
            <person name="Clabauld G."/>
            <person name="Muendlein A."/>
            <person name="Felber R."/>
            <person name="Schnabl S."/>
            <person name="Hiller R."/>
            <person name="Schmidt W."/>
            <person name="Lecharny A."/>
            <person name="Aubourg S."/>
            <person name="Chefdor F."/>
            <person name="Cooke R."/>
            <person name="Berger C."/>
            <person name="Monfort A."/>
            <person name="Casacuberta E."/>
            <person name="Gibbons T."/>
            <person name="Weber N."/>
            <person name="Vandenbol M."/>
            <person name="Bargues M."/>
            <person name="Terol J."/>
            <person name="Torres A."/>
            <person name="Perez-Perez A."/>
            <person name="Purnelle B."/>
            <person name="Bent E."/>
            <person name="Johnson S."/>
            <person name="Tacon D."/>
            <person name="Jesse T."/>
            <person name="Heijnen L."/>
            <person name="Schwarz S."/>
            <person name="Scholler P."/>
            <person name="Heber S."/>
            <person name="Francs P."/>
            <person name="Bielke C."/>
            <person name="Frishman D."/>
            <person name="Haase D."/>
            <person name="Lemcke K."/>
            <person name="Mewes H.-W."/>
            <person name="Stocker S."/>
            <person name="Zaccaria P."/>
            <person name="Bevan M."/>
            <person name="Wilson R.K."/>
            <person name="de la Bastide M."/>
            <person name="Habermann K."/>
            <person name="Parnell L."/>
            <person name="Dedhia N."/>
            <person name="Gnoj L."/>
            <person name="Schutz K."/>
            <person name="Huang E."/>
            <person name="Spiegel L."/>
            <person name="Sekhon M."/>
            <person name="Murray J."/>
            <person name="Sheet P."/>
            <person name="Cordes M."/>
            <person name="Abu-Threideh J."/>
            <person name="Stoneking T."/>
            <person name="Kalicki J."/>
            <person name="Graves T."/>
            <person name="Harmon G."/>
            <person name="Edwards J."/>
            <person name="Latreille P."/>
            <person name="Courtney L."/>
            <person name="Cloud J."/>
            <person name="Abbott A."/>
            <person name="Scott K."/>
            <person name="Johnson D."/>
            <person name="Minx P."/>
            <person name="Bentley D."/>
            <person name="Fulton B."/>
            <person name="Miller N."/>
            <person name="Greco T."/>
            <person name="Kemp K."/>
            <person name="Kramer J."/>
            <person name="Fulton L."/>
            <person name="Mardis E."/>
            <person name="Dante M."/>
            <person name="Pepin K."/>
            <person name="Hillier L.W."/>
            <person name="Nelson J."/>
            <person name="Spieth J."/>
            <person name="Ryan E."/>
            <person name="Andrews S."/>
            <person name="Geisel C."/>
            <person name="Layman D."/>
            <person name="Du H."/>
            <person name="Ali J."/>
            <person name="Berghoff A."/>
            <person name="Jones K."/>
            <person name="Drone K."/>
            <person name="Cotton M."/>
            <person name="Joshu C."/>
            <person name="Antonoiu B."/>
            <person name="Zidanic M."/>
            <person name="Strong C."/>
            <person name="Sun H."/>
            <person name="Lamar B."/>
            <person name="Yordan C."/>
            <person name="Ma P."/>
            <person name="Zhong J."/>
            <person name="Preston R."/>
            <person name="Vil D."/>
            <person name="Shekher M."/>
            <person name="Matero A."/>
            <person name="Shah R."/>
            <person name="Swaby I.K."/>
            <person name="O'Shaughnessy A."/>
            <person name="Rodriguez M."/>
            <person name="Hoffman J."/>
            <person name="Till S."/>
            <person name="Granat S."/>
            <person name="Shohdy N."/>
            <person name="Hasegawa A."/>
            <person name="Hameed A."/>
            <person name="Lodhi M."/>
            <person name="Johnson A."/>
            <person name="Chen E."/>
            <person name="Marra M.A."/>
            <person name="Martienssen R."/>
            <person name="McCombie W.R."/>
        </authorList>
    </citation>
    <scope>NUCLEOTIDE SEQUENCE [LARGE SCALE GENOMIC DNA]</scope>
    <source>
        <strain>cv. Columbia</strain>
    </source>
</reference>
<reference key="2">
    <citation type="journal article" date="2017" name="Plant J.">
        <title>Araport11: a complete reannotation of the Arabidopsis thaliana reference genome.</title>
        <authorList>
            <person name="Cheng C.Y."/>
            <person name="Krishnakumar V."/>
            <person name="Chan A.P."/>
            <person name="Thibaud-Nissen F."/>
            <person name="Schobel S."/>
            <person name="Town C.D."/>
        </authorList>
    </citation>
    <scope>GENOME REANNOTATION</scope>
    <source>
        <strain>cv. Columbia</strain>
    </source>
</reference>
<reference key="3">
    <citation type="journal article" date="2003" name="Science">
        <title>Empirical analysis of transcriptional activity in the Arabidopsis genome.</title>
        <authorList>
            <person name="Yamada K."/>
            <person name="Lim J."/>
            <person name="Dale J.M."/>
            <person name="Chen H."/>
            <person name="Shinn P."/>
            <person name="Palm C.J."/>
            <person name="Southwick A.M."/>
            <person name="Wu H.C."/>
            <person name="Kim C.J."/>
            <person name="Nguyen M."/>
            <person name="Pham P.K."/>
            <person name="Cheuk R.F."/>
            <person name="Karlin-Newmann G."/>
            <person name="Liu S.X."/>
            <person name="Lam B."/>
            <person name="Sakano H."/>
            <person name="Wu T."/>
            <person name="Yu G."/>
            <person name="Miranda M."/>
            <person name="Quach H.L."/>
            <person name="Tripp M."/>
            <person name="Chang C.H."/>
            <person name="Lee J.M."/>
            <person name="Toriumi M.J."/>
            <person name="Chan M.M."/>
            <person name="Tang C.C."/>
            <person name="Onodera C.S."/>
            <person name="Deng J.M."/>
            <person name="Akiyama K."/>
            <person name="Ansari Y."/>
            <person name="Arakawa T."/>
            <person name="Banh J."/>
            <person name="Banno F."/>
            <person name="Bowser L."/>
            <person name="Brooks S.Y."/>
            <person name="Carninci P."/>
            <person name="Chao Q."/>
            <person name="Choy N."/>
            <person name="Enju A."/>
            <person name="Goldsmith A.D."/>
            <person name="Gurjal M."/>
            <person name="Hansen N.F."/>
            <person name="Hayashizaki Y."/>
            <person name="Johnson-Hopson C."/>
            <person name="Hsuan V.W."/>
            <person name="Iida K."/>
            <person name="Karnes M."/>
            <person name="Khan S."/>
            <person name="Koesema E."/>
            <person name="Ishida J."/>
            <person name="Jiang P.X."/>
            <person name="Jones T."/>
            <person name="Kawai J."/>
            <person name="Kamiya A."/>
            <person name="Meyers C."/>
            <person name="Nakajima M."/>
            <person name="Narusaka M."/>
            <person name="Seki M."/>
            <person name="Sakurai T."/>
            <person name="Satou M."/>
            <person name="Tamse R."/>
            <person name="Vaysberg M."/>
            <person name="Wallender E.K."/>
            <person name="Wong C."/>
            <person name="Yamamura Y."/>
            <person name="Yuan S."/>
            <person name="Shinozaki K."/>
            <person name="Davis R.W."/>
            <person name="Theologis A."/>
            <person name="Ecker J.R."/>
        </authorList>
    </citation>
    <scope>NUCLEOTIDE SEQUENCE [LARGE SCALE MRNA]</scope>
    <source>
        <strain>cv. Columbia</strain>
    </source>
</reference>
<organism>
    <name type="scientific">Arabidopsis thaliana</name>
    <name type="common">Mouse-ear cress</name>
    <dbReference type="NCBI Taxonomy" id="3702"/>
    <lineage>
        <taxon>Eukaryota</taxon>
        <taxon>Viridiplantae</taxon>
        <taxon>Streptophyta</taxon>
        <taxon>Embryophyta</taxon>
        <taxon>Tracheophyta</taxon>
        <taxon>Spermatophyta</taxon>
        <taxon>Magnoliopsida</taxon>
        <taxon>eudicotyledons</taxon>
        <taxon>Gunneridae</taxon>
        <taxon>Pentapetalae</taxon>
        <taxon>rosids</taxon>
        <taxon>malvids</taxon>
        <taxon>Brassicales</taxon>
        <taxon>Brassicaceae</taxon>
        <taxon>Camelineae</taxon>
        <taxon>Arabidopsis</taxon>
    </lineage>
</organism>
<feature type="chain" id="PRO_0000249239" description="Derlin-2.1">
    <location>
        <begin position="1"/>
        <end position="244"/>
    </location>
</feature>
<feature type="topological domain" description="Cytoplasmic" evidence="2">
    <location>
        <begin position="1"/>
        <end position="21"/>
    </location>
</feature>
<feature type="transmembrane region" description="Helical; Name=1" evidence="2">
    <location>
        <begin position="22"/>
        <end position="42"/>
    </location>
</feature>
<feature type="topological domain" description="Lumenal" evidence="2">
    <location>
        <begin position="43"/>
        <end position="96"/>
    </location>
</feature>
<feature type="transmembrane region" description="Helical; Name=2" evidence="2">
    <location>
        <begin position="97"/>
        <end position="117"/>
    </location>
</feature>
<feature type="topological domain" description="Cytoplasmic" evidence="2">
    <location>
        <begin position="118"/>
        <end position="121"/>
    </location>
</feature>
<feature type="transmembrane region" description="Helical; Name=3" evidence="2">
    <location>
        <begin position="122"/>
        <end position="142"/>
    </location>
</feature>
<feature type="topological domain" description="Lumenal" evidence="2">
    <location>
        <begin position="143"/>
        <end position="152"/>
    </location>
</feature>
<feature type="transmembrane region" description="Helical; Name=4" evidence="2">
    <location>
        <begin position="153"/>
        <end position="173"/>
    </location>
</feature>
<feature type="topological domain" description="Cytoplasmic" evidence="2">
    <location>
        <begin position="174"/>
        <end position="244"/>
    </location>
</feature>
<feature type="sequence conflict" description="In Ref. 1; CAA17148/CAB81288." evidence="3" ref="1">
    <original>A</original>
    <variation>T</variation>
    <location>
        <position position="94"/>
    </location>
</feature>
<name>DER21_ARATH</name>
<sequence>MAQAVEEWYKQMPIITRSYLTAAVVTTVGCSLEIISPYNLYLNPTLVVKQYQFWRLVTNFLYFRKMDLDFLFHMFFLARYCKLLEENSFRGKTADFLYMLLFGATVLTGIVLIGGMIPYLSVSFSKIIFLSNSLTFMMVYVWSKQNPYIHMSFLGLFTFTAAYLPWVLLGFSILVGASAWGDFLGMIAGHAYYFLAFVYPRMTDRRPLKTPSFLKALFADEPVVIARPEDVRFAHAPFDEIHQD</sequence>
<proteinExistence type="evidence at transcript level"/>
<gene>
    <name type="primary">DER2.1</name>
    <name type="ordered locus">At4g21810</name>
    <name type="ORF">F17L22.270</name>
    <name type="ORF">T8O5.20</name>
</gene>
<evidence type="ECO:0000250" key="1"/>
<evidence type="ECO:0000255" key="2"/>
<evidence type="ECO:0000305" key="3"/>
<accession>Q8VZ96</accession>
<accession>O49704</accession>
<accession>Q9M0L7</accession>
<accession>Q9SVR6</accession>
<protein>
    <recommendedName>
        <fullName>Derlin-2.1</fullName>
    </recommendedName>
    <alternativeName>
        <fullName>AtDerlin2-1</fullName>
    </alternativeName>
</protein>
<keyword id="KW-0256">Endoplasmic reticulum</keyword>
<keyword id="KW-0472">Membrane</keyword>
<keyword id="KW-1185">Reference proteome</keyword>
<keyword id="KW-0812">Transmembrane</keyword>
<keyword id="KW-1133">Transmembrane helix</keyword>
<comment type="function">
    <text evidence="1">May be involved in the degradation process of specific misfolded endoplasmic reticulum (ER) luminal proteins.</text>
</comment>
<comment type="subcellular location">
    <subcellularLocation>
        <location evidence="1">Endoplasmic reticulum membrane</location>
        <topology evidence="1">Multi-pass membrane protein</topology>
    </subcellularLocation>
</comment>
<comment type="similarity">
    <text evidence="3">Belongs to the derlin family.</text>
</comment>
<comment type="sequence caution" evidence="3">
    <conflict type="erroneous gene model prediction">
        <sequence resource="EMBL-CDS" id="CAA17148"/>
    </conflict>
</comment>
<comment type="sequence caution" evidence="3">
    <conflict type="erroneous gene model prediction">
        <sequence resource="EMBL-CDS" id="CAB36825"/>
    </conflict>
</comment>
<comment type="sequence caution" evidence="3">
    <conflict type="erroneous gene model prediction">
        <sequence resource="EMBL-CDS" id="CAB81288"/>
    </conflict>
</comment>
<dbReference type="EMBL" id="AL021890">
    <property type="protein sequence ID" value="CAA17148.1"/>
    <property type="status" value="ALT_SEQ"/>
    <property type="molecule type" value="Genomic_DNA"/>
</dbReference>
<dbReference type="EMBL" id="AL035527">
    <property type="protein sequence ID" value="CAB36825.1"/>
    <property type="status" value="ALT_SEQ"/>
    <property type="molecule type" value="Genomic_DNA"/>
</dbReference>
<dbReference type="EMBL" id="AL161555">
    <property type="protein sequence ID" value="CAB81288.1"/>
    <property type="status" value="ALT_SEQ"/>
    <property type="molecule type" value="Genomic_DNA"/>
</dbReference>
<dbReference type="EMBL" id="CP002687">
    <property type="protein sequence ID" value="AEE84506.1"/>
    <property type="molecule type" value="Genomic_DNA"/>
</dbReference>
<dbReference type="EMBL" id="AY065142">
    <property type="protein sequence ID" value="AAL38318.1"/>
    <property type="molecule type" value="mRNA"/>
</dbReference>
<dbReference type="EMBL" id="BT001199">
    <property type="protein sequence ID" value="AAN65086.1"/>
    <property type="molecule type" value="mRNA"/>
</dbReference>
<dbReference type="PIR" id="B85249">
    <property type="entry name" value="B85249"/>
</dbReference>
<dbReference type="PIR" id="T05463">
    <property type="entry name" value="T05463"/>
</dbReference>
<dbReference type="RefSeq" id="NP_193912.3">
    <property type="nucleotide sequence ID" value="NM_118301.7"/>
</dbReference>
<dbReference type="SMR" id="Q8VZ96"/>
<dbReference type="FunCoup" id="Q8VZ96">
    <property type="interactions" value="3652"/>
</dbReference>
<dbReference type="STRING" id="3702.Q8VZ96"/>
<dbReference type="TCDB" id="3.A.16.1.5">
    <property type="family name" value="the endoplasmic reticular retrotranslocon (er-rt) family"/>
</dbReference>
<dbReference type="PaxDb" id="3702-AT4G21810.1"/>
<dbReference type="ProteomicsDB" id="224129"/>
<dbReference type="EnsemblPlants" id="AT4G21810.1">
    <property type="protein sequence ID" value="AT4G21810.1"/>
    <property type="gene ID" value="AT4G21810"/>
</dbReference>
<dbReference type="GeneID" id="828269"/>
<dbReference type="Gramene" id="AT4G21810.1">
    <property type="protein sequence ID" value="AT4G21810.1"/>
    <property type="gene ID" value="AT4G21810"/>
</dbReference>
<dbReference type="KEGG" id="ath:AT4G21810"/>
<dbReference type="Araport" id="AT4G21810"/>
<dbReference type="TAIR" id="AT4G21810">
    <property type="gene designation" value="DER2.1"/>
</dbReference>
<dbReference type="eggNOG" id="KOG0858">
    <property type="taxonomic scope" value="Eukaryota"/>
</dbReference>
<dbReference type="HOGENOM" id="CLU_051898_5_2_1"/>
<dbReference type="InParanoid" id="Q8VZ96"/>
<dbReference type="OMA" id="CYLPIVF"/>
<dbReference type="OrthoDB" id="1716531at2759"/>
<dbReference type="PRO" id="PR:Q8VZ96"/>
<dbReference type="Proteomes" id="UP000006548">
    <property type="component" value="Chromosome 4"/>
</dbReference>
<dbReference type="ExpressionAtlas" id="Q8VZ96">
    <property type="expression patterns" value="baseline and differential"/>
</dbReference>
<dbReference type="GO" id="GO:0005789">
    <property type="term" value="C:endoplasmic reticulum membrane"/>
    <property type="evidence" value="ECO:0007669"/>
    <property type="project" value="UniProtKB-SubCell"/>
</dbReference>
<dbReference type="GO" id="GO:0006950">
    <property type="term" value="P:response to stress"/>
    <property type="evidence" value="ECO:0007669"/>
    <property type="project" value="UniProtKB-ARBA"/>
</dbReference>
<dbReference type="InterPro" id="IPR007599">
    <property type="entry name" value="DER1"/>
</dbReference>
<dbReference type="InterPro" id="IPR035952">
    <property type="entry name" value="Rhomboid-like_sf"/>
</dbReference>
<dbReference type="PANTHER" id="PTHR11009">
    <property type="entry name" value="DER1-LIKE PROTEIN, DERLIN"/>
    <property type="match status" value="1"/>
</dbReference>
<dbReference type="Pfam" id="PF04511">
    <property type="entry name" value="DER1"/>
    <property type="match status" value="1"/>
</dbReference>
<dbReference type="SUPFAM" id="SSF144091">
    <property type="entry name" value="Rhomboid-like"/>
    <property type="match status" value="1"/>
</dbReference>